<name>RALY_MOUSE</name>
<accession>Q64012</accession>
<accession>A2AU63</accession>
<accession>Q99K76</accession>
<accession>Q9CXH8</accession>
<accession>Q9QZX6</accession>
<evidence type="ECO:0000250" key="1">
    <source>
        <dbReference type="UniProtKB" id="Q9UKM9"/>
    </source>
</evidence>
<evidence type="ECO:0000255" key="2"/>
<evidence type="ECO:0000255" key="3">
    <source>
        <dbReference type="PROSITE-ProRule" id="PRU00176"/>
    </source>
</evidence>
<evidence type="ECO:0000256" key="4">
    <source>
        <dbReference type="SAM" id="MobiDB-lite"/>
    </source>
</evidence>
<evidence type="ECO:0000269" key="5">
    <source>
    </source>
</evidence>
<evidence type="ECO:0000269" key="6">
    <source>
    </source>
</evidence>
<evidence type="ECO:0000269" key="7">
    <source>
    </source>
</evidence>
<evidence type="ECO:0000303" key="8">
    <source>
    </source>
</evidence>
<evidence type="ECO:0000303" key="9">
    <source>
    </source>
</evidence>
<evidence type="ECO:0000303" key="10">
    <source>
    </source>
</evidence>
<evidence type="ECO:0000303" key="11">
    <source>
    </source>
</evidence>
<evidence type="ECO:0000305" key="12"/>
<evidence type="ECO:0007744" key="13">
    <source>
    </source>
</evidence>
<evidence type="ECO:0007744" key="14">
    <source>
    </source>
</evidence>
<evidence type="ECO:0007744" key="15">
    <source>
    </source>
</evidence>
<evidence type="ECO:0007744" key="16">
    <source>
    </source>
</evidence>
<evidence type="ECO:0007744" key="17">
    <source>
    </source>
</evidence>
<reference key="1">
    <citation type="journal article" date="1993" name="Genes Dev.">
        <title>The embryonic lethality of homozygous lethal yellow mice (Ay/Ay) is associated with the disruption of a novel RNA-binding protein.</title>
        <authorList>
            <person name="Michaud E.J."/>
            <person name="Bultman S.J."/>
            <person name="Stubbs L.J."/>
            <person name="Woychik R.P."/>
        </authorList>
    </citation>
    <scope>NUCLEOTIDE SEQUENCE [MRNA] (ISOFORM 1)</scope>
    <scope>TISSUE SPECIFICITY</scope>
    <scope>DEVELOPMENTAL STAGE</scope>
    <scope>INVOLVEMENT IN A(Y)</scope>
    <source>
        <tissue>Embryo</tissue>
    </source>
</reference>
<reference key="2">
    <citation type="journal article" date="1994" name="Development">
        <title>Pleiotropic effects of the mouse lethal yellow (Ay) mutation explained by deletion of a maternally expressed gene and the simultaneous production of agouti fusion RNAs.</title>
        <authorList>
            <person name="Duhl D.M."/>
            <person name="Stevens M.E."/>
            <person name="Vrieling H."/>
            <person name="Saxon P.J."/>
            <person name="Miller M.W."/>
            <person name="Epstein C.J."/>
            <person name="Barsh G.S."/>
        </authorList>
    </citation>
    <scope>NUCLEOTIDE SEQUENCE [MRNA] (ISOFORM 1)</scope>
    <scope>INVOLVEMENT IN A(Y)</scope>
</reference>
<reference key="3">
    <citation type="journal article" date="2005" name="Science">
        <title>The transcriptional landscape of the mammalian genome.</title>
        <authorList>
            <person name="Carninci P."/>
            <person name="Kasukawa T."/>
            <person name="Katayama S."/>
            <person name="Gough J."/>
            <person name="Frith M.C."/>
            <person name="Maeda N."/>
            <person name="Oyama R."/>
            <person name="Ravasi T."/>
            <person name="Lenhard B."/>
            <person name="Wells C."/>
            <person name="Kodzius R."/>
            <person name="Shimokawa K."/>
            <person name="Bajic V.B."/>
            <person name="Brenner S.E."/>
            <person name="Batalov S."/>
            <person name="Forrest A.R."/>
            <person name="Zavolan M."/>
            <person name="Davis M.J."/>
            <person name="Wilming L.G."/>
            <person name="Aidinis V."/>
            <person name="Allen J.E."/>
            <person name="Ambesi-Impiombato A."/>
            <person name="Apweiler R."/>
            <person name="Aturaliya R.N."/>
            <person name="Bailey T.L."/>
            <person name="Bansal M."/>
            <person name="Baxter L."/>
            <person name="Beisel K.W."/>
            <person name="Bersano T."/>
            <person name="Bono H."/>
            <person name="Chalk A.M."/>
            <person name="Chiu K.P."/>
            <person name="Choudhary V."/>
            <person name="Christoffels A."/>
            <person name="Clutterbuck D.R."/>
            <person name="Crowe M.L."/>
            <person name="Dalla E."/>
            <person name="Dalrymple B.P."/>
            <person name="de Bono B."/>
            <person name="Della Gatta G."/>
            <person name="di Bernardo D."/>
            <person name="Down T."/>
            <person name="Engstrom P."/>
            <person name="Fagiolini M."/>
            <person name="Faulkner G."/>
            <person name="Fletcher C.F."/>
            <person name="Fukushima T."/>
            <person name="Furuno M."/>
            <person name="Futaki S."/>
            <person name="Gariboldi M."/>
            <person name="Georgii-Hemming P."/>
            <person name="Gingeras T.R."/>
            <person name="Gojobori T."/>
            <person name="Green R.E."/>
            <person name="Gustincich S."/>
            <person name="Harbers M."/>
            <person name="Hayashi Y."/>
            <person name="Hensch T.K."/>
            <person name="Hirokawa N."/>
            <person name="Hill D."/>
            <person name="Huminiecki L."/>
            <person name="Iacono M."/>
            <person name="Ikeo K."/>
            <person name="Iwama A."/>
            <person name="Ishikawa T."/>
            <person name="Jakt M."/>
            <person name="Kanapin A."/>
            <person name="Katoh M."/>
            <person name="Kawasawa Y."/>
            <person name="Kelso J."/>
            <person name="Kitamura H."/>
            <person name="Kitano H."/>
            <person name="Kollias G."/>
            <person name="Krishnan S.P."/>
            <person name="Kruger A."/>
            <person name="Kummerfeld S.K."/>
            <person name="Kurochkin I.V."/>
            <person name="Lareau L.F."/>
            <person name="Lazarevic D."/>
            <person name="Lipovich L."/>
            <person name="Liu J."/>
            <person name="Liuni S."/>
            <person name="McWilliam S."/>
            <person name="Madan Babu M."/>
            <person name="Madera M."/>
            <person name="Marchionni L."/>
            <person name="Matsuda H."/>
            <person name="Matsuzawa S."/>
            <person name="Miki H."/>
            <person name="Mignone F."/>
            <person name="Miyake S."/>
            <person name="Morris K."/>
            <person name="Mottagui-Tabar S."/>
            <person name="Mulder N."/>
            <person name="Nakano N."/>
            <person name="Nakauchi H."/>
            <person name="Ng P."/>
            <person name="Nilsson R."/>
            <person name="Nishiguchi S."/>
            <person name="Nishikawa S."/>
            <person name="Nori F."/>
            <person name="Ohara O."/>
            <person name="Okazaki Y."/>
            <person name="Orlando V."/>
            <person name="Pang K.C."/>
            <person name="Pavan W.J."/>
            <person name="Pavesi G."/>
            <person name="Pesole G."/>
            <person name="Petrovsky N."/>
            <person name="Piazza S."/>
            <person name="Reed J."/>
            <person name="Reid J.F."/>
            <person name="Ring B.Z."/>
            <person name="Ringwald M."/>
            <person name="Rost B."/>
            <person name="Ruan Y."/>
            <person name="Salzberg S.L."/>
            <person name="Sandelin A."/>
            <person name="Schneider C."/>
            <person name="Schoenbach C."/>
            <person name="Sekiguchi K."/>
            <person name="Semple C.A."/>
            <person name="Seno S."/>
            <person name="Sessa L."/>
            <person name="Sheng Y."/>
            <person name="Shibata Y."/>
            <person name="Shimada H."/>
            <person name="Shimada K."/>
            <person name="Silva D."/>
            <person name="Sinclair B."/>
            <person name="Sperling S."/>
            <person name="Stupka E."/>
            <person name="Sugiura K."/>
            <person name="Sultana R."/>
            <person name="Takenaka Y."/>
            <person name="Taki K."/>
            <person name="Tammoja K."/>
            <person name="Tan S.L."/>
            <person name="Tang S."/>
            <person name="Taylor M.S."/>
            <person name="Tegner J."/>
            <person name="Teichmann S.A."/>
            <person name="Ueda H.R."/>
            <person name="van Nimwegen E."/>
            <person name="Verardo R."/>
            <person name="Wei C.L."/>
            <person name="Yagi K."/>
            <person name="Yamanishi H."/>
            <person name="Zabarovsky E."/>
            <person name="Zhu S."/>
            <person name="Zimmer A."/>
            <person name="Hide W."/>
            <person name="Bult C."/>
            <person name="Grimmond S.M."/>
            <person name="Teasdale R.D."/>
            <person name="Liu E.T."/>
            <person name="Brusic V."/>
            <person name="Quackenbush J."/>
            <person name="Wahlestedt C."/>
            <person name="Mattick J.S."/>
            <person name="Hume D.A."/>
            <person name="Kai C."/>
            <person name="Sasaki D."/>
            <person name="Tomaru Y."/>
            <person name="Fukuda S."/>
            <person name="Kanamori-Katayama M."/>
            <person name="Suzuki M."/>
            <person name="Aoki J."/>
            <person name="Arakawa T."/>
            <person name="Iida J."/>
            <person name="Imamura K."/>
            <person name="Itoh M."/>
            <person name="Kato T."/>
            <person name="Kawaji H."/>
            <person name="Kawagashira N."/>
            <person name="Kawashima T."/>
            <person name="Kojima M."/>
            <person name="Kondo S."/>
            <person name="Konno H."/>
            <person name="Nakano K."/>
            <person name="Ninomiya N."/>
            <person name="Nishio T."/>
            <person name="Okada M."/>
            <person name="Plessy C."/>
            <person name="Shibata K."/>
            <person name="Shiraki T."/>
            <person name="Suzuki S."/>
            <person name="Tagami M."/>
            <person name="Waki K."/>
            <person name="Watahiki A."/>
            <person name="Okamura-Oho Y."/>
            <person name="Suzuki H."/>
            <person name="Kawai J."/>
            <person name="Hayashizaki Y."/>
        </authorList>
    </citation>
    <scope>NUCLEOTIDE SEQUENCE [LARGE SCALE MRNA] (ISOFORM 1)</scope>
    <source>
        <strain>C57BL/6J</strain>
        <tissue>Embryonic head</tissue>
    </source>
</reference>
<reference key="4">
    <citation type="journal article" date="2009" name="PLoS Biol.">
        <title>Lineage-specific biology revealed by a finished genome assembly of the mouse.</title>
        <authorList>
            <person name="Church D.M."/>
            <person name="Goodstadt L."/>
            <person name="Hillier L.W."/>
            <person name="Zody M.C."/>
            <person name="Goldstein S."/>
            <person name="She X."/>
            <person name="Bult C.J."/>
            <person name="Agarwala R."/>
            <person name="Cherry J.L."/>
            <person name="DiCuccio M."/>
            <person name="Hlavina W."/>
            <person name="Kapustin Y."/>
            <person name="Meric P."/>
            <person name="Maglott D."/>
            <person name="Birtle Z."/>
            <person name="Marques A.C."/>
            <person name="Graves T."/>
            <person name="Zhou S."/>
            <person name="Teague B."/>
            <person name="Potamousis K."/>
            <person name="Churas C."/>
            <person name="Place M."/>
            <person name="Herschleb J."/>
            <person name="Runnheim R."/>
            <person name="Forrest D."/>
            <person name="Amos-Landgraf J."/>
            <person name="Schwartz D.C."/>
            <person name="Cheng Z."/>
            <person name="Lindblad-Toh K."/>
            <person name="Eichler E.E."/>
            <person name="Ponting C.P."/>
        </authorList>
    </citation>
    <scope>NUCLEOTIDE SEQUENCE [LARGE SCALE GENOMIC DNA]</scope>
    <source>
        <strain>C57BL/6J</strain>
    </source>
</reference>
<reference key="5">
    <citation type="journal article" date="2004" name="Genome Res.">
        <title>The status, quality, and expansion of the NIH full-length cDNA project: the Mammalian Gene Collection (MGC).</title>
        <authorList>
            <consortium name="The MGC Project Team"/>
        </authorList>
    </citation>
    <scope>NUCLEOTIDE SEQUENCE [LARGE SCALE MRNA] (ISOFORM 1)</scope>
    <source>
        <tissue>Mammary gland</tissue>
    </source>
</reference>
<reference key="6">
    <citation type="journal article" date="1999" name="Biochim. Biophys. Acta">
        <title>Alternative processing of the human and mouse raly genes.</title>
        <authorList>
            <person name="Khrebtukova I."/>
            <person name="Kuklin A."/>
            <person name="Woychik R.P."/>
            <person name="Michaud E.J."/>
        </authorList>
    </citation>
    <scope>NUCLEOTIDE SEQUENCE [MRNA] OF 100-135 (ISOFORM 2)</scope>
</reference>
<reference key="7">
    <citation type="journal article" date="2007" name="Proc. Natl. Acad. Sci. U.S.A.">
        <title>Large-scale phosphorylation analysis of mouse liver.</title>
        <authorList>
            <person name="Villen J."/>
            <person name="Beausoleil S.A."/>
            <person name="Gerber S.A."/>
            <person name="Gygi S.P."/>
        </authorList>
    </citation>
    <scope>PHOSPHORYLATION [LARGE SCALE ANALYSIS] AT THR-268; SER-270; THR-274; THR-292 AND THR-304</scope>
    <scope>IDENTIFICATION BY MASS SPECTROMETRY [LARGE SCALE ANALYSIS]</scope>
    <source>
        <tissue>Liver</tissue>
    </source>
</reference>
<reference key="8">
    <citation type="journal article" date="2008" name="J. Proteome Res.">
        <title>Specific phosphopeptide enrichment with immobilized titanium ion affinity chromatography adsorbent for phosphoproteome analysis.</title>
        <authorList>
            <person name="Zhou H."/>
            <person name="Ye M."/>
            <person name="Dong J."/>
            <person name="Han G."/>
            <person name="Jiang X."/>
            <person name="Wu R."/>
            <person name="Zou H."/>
        </authorList>
    </citation>
    <scope>PHOSPHORYLATION [LARGE SCALE ANALYSIS] AT THR-274</scope>
    <scope>IDENTIFICATION BY MASS SPECTROMETRY [LARGE SCALE ANALYSIS]</scope>
    <source>
        <tissue>Liver</tissue>
    </source>
</reference>
<reference key="9">
    <citation type="journal article" date="2009" name="Immunity">
        <title>The phagosomal proteome in interferon-gamma-activated macrophages.</title>
        <authorList>
            <person name="Trost M."/>
            <person name="English L."/>
            <person name="Lemieux S."/>
            <person name="Courcelles M."/>
            <person name="Desjardins M."/>
            <person name="Thibault P."/>
        </authorList>
    </citation>
    <scope>PHOSPHORYLATION [LARGE SCALE ANALYSIS] AT SER-135; THR-268; SER-270 AND THR-274</scope>
    <scope>IDENTIFICATION BY MASS SPECTROMETRY [LARGE SCALE ANALYSIS]</scope>
</reference>
<reference key="10">
    <citation type="journal article" date="2010" name="Cell">
        <title>A tissue-specific atlas of mouse protein phosphorylation and expression.</title>
        <authorList>
            <person name="Huttlin E.L."/>
            <person name="Jedrychowski M.P."/>
            <person name="Elias J.E."/>
            <person name="Goswami T."/>
            <person name="Rad R."/>
            <person name="Beausoleil S.A."/>
            <person name="Villen J."/>
            <person name="Haas W."/>
            <person name="Sowa M.E."/>
            <person name="Gygi S.P."/>
        </authorList>
    </citation>
    <scope>PHOSPHORYLATION [LARGE SCALE ANALYSIS] AT THR-268; SER-270; THR-274; THR-292; SER-294; SER-301 AND THR-304</scope>
    <scope>IDENTIFICATION BY MASS SPECTROMETRY [LARGE SCALE ANALYSIS]</scope>
    <source>
        <tissue>Brain</tissue>
        <tissue>Brown adipose tissue</tissue>
        <tissue>Heart</tissue>
        <tissue>Kidney</tissue>
        <tissue>Liver</tissue>
        <tissue>Lung</tissue>
        <tissue>Pancreas</tissue>
        <tissue>Spleen</tissue>
        <tissue>Testis</tissue>
    </source>
</reference>
<reference key="11">
    <citation type="journal article" date="2013" name="Mol. Cell">
        <title>SIRT5-mediated lysine desuccinylation impacts diverse metabolic pathways.</title>
        <authorList>
            <person name="Park J."/>
            <person name="Chen Y."/>
            <person name="Tishkoff D.X."/>
            <person name="Peng C."/>
            <person name="Tan M."/>
            <person name="Dai L."/>
            <person name="Xie Z."/>
            <person name="Zhang Y."/>
            <person name="Zwaans B.M."/>
            <person name="Skinner M.E."/>
            <person name="Lombard D.B."/>
            <person name="Zhao Y."/>
        </authorList>
    </citation>
    <scope>ACETYLATION [LARGE SCALE ANALYSIS] AT LYS-44 AND LYS-165</scope>
    <scope>IDENTIFICATION BY MASS SPECTROMETRY [LARGE SCALE ANALYSIS]</scope>
    <source>
        <tissue>Embryonic fibroblast</tissue>
    </source>
</reference>
<reference key="12">
    <citation type="journal article" date="2016" name="Nature">
        <title>Feedback modulation of cholesterol metabolism by the lipid-responsive non-coding RNA LeXis.</title>
        <authorList>
            <person name="Sallam T."/>
            <person name="Jones M.C."/>
            <person name="Gilliland T."/>
            <person name="Zhang L."/>
            <person name="Wu X."/>
            <person name="Eskin A."/>
            <person name="Sandhu J."/>
            <person name="Casero D."/>
            <person name="Vallim T.Q."/>
            <person name="Hong C."/>
            <person name="Katz M."/>
            <person name="Lee R."/>
            <person name="Whitelegge J."/>
            <person name="Tontonoz P."/>
        </authorList>
    </citation>
    <scope>FUNCTION</scope>
    <scope>RNA-BINDING</scope>
    <scope>SUBCELLULAR LOCATION</scope>
</reference>
<keyword id="KW-0007">Acetylation</keyword>
<keyword id="KW-0025">Alternative splicing</keyword>
<keyword id="KW-0175">Coiled coil</keyword>
<keyword id="KW-1017">Isopeptide bond</keyword>
<keyword id="KW-0507">mRNA processing</keyword>
<keyword id="KW-0508">mRNA splicing</keyword>
<keyword id="KW-0539">Nucleus</keyword>
<keyword id="KW-0597">Phosphoprotein</keyword>
<keyword id="KW-1185">Reference proteome</keyword>
<keyword id="KW-0687">Ribonucleoprotein</keyword>
<keyword id="KW-0694">RNA-binding</keyword>
<keyword id="KW-0747">Spliceosome</keyword>
<keyword id="KW-0804">Transcription</keyword>
<keyword id="KW-0805">Transcription regulation</keyword>
<keyword id="KW-0832">Ubl conjugation</keyword>
<proteinExistence type="evidence at protein level"/>
<organism>
    <name type="scientific">Mus musculus</name>
    <name type="common">Mouse</name>
    <dbReference type="NCBI Taxonomy" id="10090"/>
    <lineage>
        <taxon>Eukaryota</taxon>
        <taxon>Metazoa</taxon>
        <taxon>Chordata</taxon>
        <taxon>Craniata</taxon>
        <taxon>Vertebrata</taxon>
        <taxon>Euteleostomi</taxon>
        <taxon>Mammalia</taxon>
        <taxon>Eutheria</taxon>
        <taxon>Euarchontoglires</taxon>
        <taxon>Glires</taxon>
        <taxon>Rodentia</taxon>
        <taxon>Myomorpha</taxon>
        <taxon>Muroidea</taxon>
        <taxon>Muridae</taxon>
        <taxon>Murinae</taxon>
        <taxon>Mus</taxon>
        <taxon>Mus</taxon>
    </lineage>
</organism>
<sequence>MSLKIQTSNVTNKNDPKSINSRVFIGNLNTAVVKKSDVETIFSKYGRVAGCSVHKGYAFVQYANERHARAAVLGENGRVLAGQTLDINMAGEPKPNRPKGLKRAATAIYSGYSFDYDYYQDYFCARLFDYRGRLSPVPVPRAVPVKRPRVTVPLVRRVKTTIPVKLFARSTAVTTGSAKIKLKSSELQTIKTELTQIKSNIDALLGRLEQIAEEQKANPDGKKKGDSSSGGGGGSSGGGGSSNVGGGSSGGSGSCSSSSRLPAPQEDTASEAGTPQGEVQTRDDGDEEGLLTHSEEELEHSQDTDAEDGALQ</sequence>
<dbReference type="EMBL" id="S72641">
    <property type="protein sequence ID" value="AAC60688.1"/>
    <property type="molecule type" value="mRNA"/>
</dbReference>
<dbReference type="EMBL" id="L17076">
    <property type="status" value="NOT_ANNOTATED_CDS"/>
    <property type="molecule type" value="mRNA"/>
</dbReference>
<dbReference type="EMBL" id="AK014356">
    <property type="protein sequence ID" value="BAB29294.1"/>
    <property type="molecule type" value="mRNA"/>
</dbReference>
<dbReference type="EMBL" id="AL929024">
    <property type="status" value="NOT_ANNOTATED_CDS"/>
    <property type="molecule type" value="Genomic_DNA"/>
</dbReference>
<dbReference type="EMBL" id="BC004851">
    <property type="protein sequence ID" value="AAH04851.1"/>
    <property type="molecule type" value="mRNA"/>
</dbReference>
<dbReference type="EMBL" id="BC016587">
    <property type="protein sequence ID" value="AAH16587.1"/>
    <property type="molecule type" value="mRNA"/>
</dbReference>
<dbReference type="EMBL" id="AF148458">
    <property type="protein sequence ID" value="AAF04488.1"/>
    <property type="molecule type" value="mRNA"/>
</dbReference>
<dbReference type="CCDS" id="CCDS16939.1">
    <molecule id="Q64012-2"/>
</dbReference>
<dbReference type="CCDS" id="CCDS50767.1">
    <molecule id="Q64012-1"/>
</dbReference>
<dbReference type="PIR" id="I53142">
    <property type="entry name" value="I53142"/>
</dbReference>
<dbReference type="RefSeq" id="NP_001132983.1">
    <molecule id="Q64012-2"/>
    <property type="nucleotide sequence ID" value="NM_001139511.2"/>
</dbReference>
<dbReference type="RefSeq" id="NP_001132984.1">
    <molecule id="Q64012-2"/>
    <property type="nucleotide sequence ID" value="NM_001139512.2"/>
</dbReference>
<dbReference type="RefSeq" id="NP_001132985.1">
    <molecule id="Q64012-1"/>
    <property type="nucleotide sequence ID" value="NM_001139513.2"/>
</dbReference>
<dbReference type="RefSeq" id="NP_001407735.1">
    <molecule id="Q64012-1"/>
    <property type="nucleotide sequence ID" value="NM_001420806.1"/>
</dbReference>
<dbReference type="RefSeq" id="NP_001407736.1">
    <molecule id="Q64012-1"/>
    <property type="nucleotide sequence ID" value="NM_001420807.1"/>
</dbReference>
<dbReference type="RefSeq" id="NP_001407737.1">
    <molecule id="Q64012-1"/>
    <property type="nucleotide sequence ID" value="NM_001420808.1"/>
</dbReference>
<dbReference type="RefSeq" id="NP_001407738.1">
    <molecule id="Q64012-1"/>
    <property type="nucleotide sequence ID" value="NM_001420809.1"/>
</dbReference>
<dbReference type="RefSeq" id="NP_001407739.1">
    <molecule id="Q64012-2"/>
    <property type="nucleotide sequence ID" value="NM_001420810.1"/>
</dbReference>
<dbReference type="RefSeq" id="NP_001407740.1">
    <molecule id="Q64012-2"/>
    <property type="nucleotide sequence ID" value="NM_001420811.1"/>
</dbReference>
<dbReference type="RefSeq" id="NP_001407741.1">
    <molecule id="Q64012-2"/>
    <property type="nucleotide sequence ID" value="NM_001420812.1"/>
</dbReference>
<dbReference type="RefSeq" id="NP_001407742.1">
    <molecule id="Q64012-2"/>
    <property type="nucleotide sequence ID" value="NM_001420813.1"/>
</dbReference>
<dbReference type="RefSeq" id="NP_001407743.1">
    <molecule id="Q64012-2"/>
    <property type="nucleotide sequence ID" value="NM_001420814.1"/>
</dbReference>
<dbReference type="RefSeq" id="NP_075619.2">
    <molecule id="Q64012-2"/>
    <property type="nucleotide sequence ID" value="NM_023130.4"/>
</dbReference>
<dbReference type="RefSeq" id="XP_006499076.1">
    <property type="nucleotide sequence ID" value="XM_006499013.3"/>
</dbReference>
<dbReference type="RefSeq" id="XP_006499077.1">
    <property type="nucleotide sequence ID" value="XM_006499014.3"/>
</dbReference>
<dbReference type="RefSeq" id="XP_006499078.1">
    <property type="nucleotide sequence ID" value="XM_006499015.2"/>
</dbReference>
<dbReference type="RefSeq" id="XP_006499079.1">
    <property type="nucleotide sequence ID" value="XM_006499016.2"/>
</dbReference>
<dbReference type="RefSeq" id="XP_017172120.1">
    <property type="nucleotide sequence ID" value="XM_017316631.1"/>
</dbReference>
<dbReference type="RefSeq" id="XP_036015619.1">
    <molecule id="Q64012-1"/>
    <property type="nucleotide sequence ID" value="XM_036159726.1"/>
</dbReference>
<dbReference type="SMR" id="Q64012"/>
<dbReference type="BioGRID" id="202579">
    <property type="interactions" value="11"/>
</dbReference>
<dbReference type="FunCoup" id="Q64012">
    <property type="interactions" value="3105"/>
</dbReference>
<dbReference type="IntAct" id="Q64012">
    <property type="interactions" value="8"/>
</dbReference>
<dbReference type="MINT" id="Q64012"/>
<dbReference type="STRING" id="10090.ENSMUSP00000029120"/>
<dbReference type="GlyGen" id="Q64012">
    <property type="glycosylation" value="1 site, 1 O-linked glycan (1 site)"/>
</dbReference>
<dbReference type="iPTMnet" id="Q64012"/>
<dbReference type="PhosphoSitePlus" id="Q64012"/>
<dbReference type="SwissPalm" id="Q64012"/>
<dbReference type="jPOST" id="Q64012"/>
<dbReference type="PaxDb" id="10090-ENSMUSP00000058105"/>
<dbReference type="PeptideAtlas" id="Q64012"/>
<dbReference type="ProteomicsDB" id="300349">
    <molecule id="Q64012-1"/>
</dbReference>
<dbReference type="ProteomicsDB" id="300350">
    <molecule id="Q64012-2"/>
</dbReference>
<dbReference type="Pumba" id="Q64012"/>
<dbReference type="Antibodypedia" id="10794">
    <property type="antibodies" value="254 antibodies from 31 providers"/>
</dbReference>
<dbReference type="DNASU" id="19383"/>
<dbReference type="Ensembl" id="ENSMUST00000029120.14">
    <molecule id="Q64012-1"/>
    <property type="protein sequence ID" value="ENSMUSP00000029120.8"/>
    <property type="gene ID" value="ENSMUSG00000027593.16"/>
</dbReference>
<dbReference type="Ensembl" id="ENSMUST00000058089.13">
    <molecule id="Q64012-2"/>
    <property type="protein sequence ID" value="ENSMUSP00000058105.7"/>
    <property type="gene ID" value="ENSMUSG00000027593.16"/>
</dbReference>
<dbReference type="Ensembl" id="ENSMUST00000109701.10">
    <molecule id="Q64012-2"/>
    <property type="protein sequence ID" value="ENSMUSP00000105323.4"/>
    <property type="gene ID" value="ENSMUSG00000027593.16"/>
</dbReference>
<dbReference type="Ensembl" id="ENSMUST00000116389.9">
    <molecule id="Q64012-1"/>
    <property type="protein sequence ID" value="ENSMUSP00000112090.3"/>
    <property type="gene ID" value="ENSMUSG00000027593.16"/>
</dbReference>
<dbReference type="GeneID" id="19383"/>
<dbReference type="KEGG" id="mmu:19383"/>
<dbReference type="UCSC" id="uc008njv.2">
    <molecule id="Q64012-1"/>
    <property type="organism name" value="mouse"/>
</dbReference>
<dbReference type="AGR" id="MGI:97850"/>
<dbReference type="CTD" id="22913"/>
<dbReference type="MGI" id="MGI:97850">
    <property type="gene designation" value="Raly"/>
</dbReference>
<dbReference type="VEuPathDB" id="HostDB:ENSMUSG00000027593"/>
<dbReference type="eggNOG" id="KOG0118">
    <property type="taxonomic scope" value="Eukaryota"/>
</dbReference>
<dbReference type="GeneTree" id="ENSGT00940000157601"/>
<dbReference type="InParanoid" id="Q64012"/>
<dbReference type="OMA" id="XLFDYRG"/>
<dbReference type="OrthoDB" id="6730379at2759"/>
<dbReference type="PhylomeDB" id="Q64012"/>
<dbReference type="TreeFam" id="TF330974"/>
<dbReference type="BioGRID-ORCS" id="19383">
    <property type="hits" value="4 hits in 76 CRISPR screens"/>
</dbReference>
<dbReference type="ChiTaRS" id="Raly">
    <property type="organism name" value="mouse"/>
</dbReference>
<dbReference type="PRO" id="PR:Q64012"/>
<dbReference type="Proteomes" id="UP000000589">
    <property type="component" value="Chromosome 2"/>
</dbReference>
<dbReference type="RNAct" id="Q64012">
    <property type="molecule type" value="protein"/>
</dbReference>
<dbReference type="Bgee" id="ENSMUSG00000027593">
    <property type="expression patterns" value="Expressed in floor plate of midbrain and 269 other cell types or tissues"/>
</dbReference>
<dbReference type="ExpressionAtlas" id="Q64012">
    <property type="expression patterns" value="baseline and differential"/>
</dbReference>
<dbReference type="GO" id="GO:0071013">
    <property type="term" value="C:catalytic step 2 spliceosome"/>
    <property type="evidence" value="ECO:0007669"/>
    <property type="project" value="Ensembl"/>
</dbReference>
<dbReference type="GO" id="GO:0005634">
    <property type="term" value="C:nucleus"/>
    <property type="evidence" value="ECO:0000314"/>
    <property type="project" value="UniProtKB"/>
</dbReference>
<dbReference type="GO" id="GO:0003723">
    <property type="term" value="F:RNA binding"/>
    <property type="evidence" value="ECO:0000314"/>
    <property type="project" value="UniProtKB"/>
</dbReference>
<dbReference type="GO" id="GO:0003712">
    <property type="term" value="F:transcription coregulator activity"/>
    <property type="evidence" value="ECO:0000315"/>
    <property type="project" value="UniProtKB"/>
</dbReference>
<dbReference type="GO" id="GO:0042632">
    <property type="term" value="P:cholesterol homeostasis"/>
    <property type="evidence" value="ECO:0000314"/>
    <property type="project" value="UniProtKB"/>
</dbReference>
<dbReference type="GO" id="GO:0006397">
    <property type="term" value="P:mRNA processing"/>
    <property type="evidence" value="ECO:0007669"/>
    <property type="project" value="UniProtKB-KW"/>
</dbReference>
<dbReference type="GO" id="GO:0000122">
    <property type="term" value="P:negative regulation of transcription by RNA polymerase II"/>
    <property type="evidence" value="ECO:0000315"/>
    <property type="project" value="UniProtKB"/>
</dbReference>
<dbReference type="GO" id="GO:0008380">
    <property type="term" value="P:RNA splicing"/>
    <property type="evidence" value="ECO:0007669"/>
    <property type="project" value="UniProtKB-KW"/>
</dbReference>
<dbReference type="CDD" id="cd12604">
    <property type="entry name" value="RRM_RALY"/>
    <property type="match status" value="1"/>
</dbReference>
<dbReference type="FunFam" id="3.30.70.330:FF:000019">
    <property type="entry name" value="heterogeneous nuclear ribonucleoproteins C1/C2 isoform X1"/>
    <property type="match status" value="1"/>
</dbReference>
<dbReference type="Gene3D" id="3.30.70.330">
    <property type="match status" value="1"/>
</dbReference>
<dbReference type="InterPro" id="IPR017347">
    <property type="entry name" value="hnRNP_C"/>
</dbReference>
<dbReference type="InterPro" id="IPR012677">
    <property type="entry name" value="Nucleotide-bd_a/b_plait_sf"/>
</dbReference>
<dbReference type="InterPro" id="IPR034502">
    <property type="entry name" value="RALY_RRM"/>
</dbReference>
<dbReference type="InterPro" id="IPR035979">
    <property type="entry name" value="RBD_domain_sf"/>
</dbReference>
<dbReference type="InterPro" id="IPR000504">
    <property type="entry name" value="RRM_dom"/>
</dbReference>
<dbReference type="InterPro" id="IPR051186">
    <property type="entry name" value="RRM_HNRPC/RALY_subfam"/>
</dbReference>
<dbReference type="PANTHER" id="PTHR13968">
    <property type="entry name" value="HETEROGENEOUS NUCLEAR RIBONUCLEOPROTEIN"/>
    <property type="match status" value="1"/>
</dbReference>
<dbReference type="PANTHER" id="PTHR13968:SF6">
    <property type="entry name" value="RNA-BINDING PROTEIN RALY"/>
    <property type="match status" value="1"/>
</dbReference>
<dbReference type="Pfam" id="PF00076">
    <property type="entry name" value="RRM_1"/>
    <property type="match status" value="1"/>
</dbReference>
<dbReference type="PIRSF" id="PIRSF037992">
    <property type="entry name" value="hnRNP-C_Raly"/>
    <property type="match status" value="1"/>
</dbReference>
<dbReference type="SMART" id="SM00360">
    <property type="entry name" value="RRM"/>
    <property type="match status" value="1"/>
</dbReference>
<dbReference type="SUPFAM" id="SSF54928">
    <property type="entry name" value="RNA-binding domain, RBD"/>
    <property type="match status" value="1"/>
</dbReference>
<dbReference type="PROSITE" id="PS50102">
    <property type="entry name" value="RRM"/>
    <property type="match status" value="1"/>
</dbReference>
<protein>
    <recommendedName>
        <fullName>RNA-binding protein Raly</fullName>
    </recommendedName>
    <alternativeName>
        <fullName>Maternally-expressed hnRNP C-related protein</fullName>
    </alternativeName>
    <alternativeName>
        <fullName>hnRNP associated with lethal yellow protein</fullName>
    </alternativeName>
</protein>
<feature type="initiator methionine" description="Removed" evidence="1">
    <location>
        <position position="1"/>
    </location>
</feature>
<feature type="chain" id="PRO_0000081747" description="RNA-binding protein Raly">
    <location>
        <begin position="2"/>
        <end position="312"/>
    </location>
</feature>
<feature type="domain" description="RRM" evidence="3">
    <location>
        <begin position="21"/>
        <end position="92"/>
    </location>
</feature>
<feature type="region of interest" description="Disordered" evidence="4">
    <location>
        <begin position="214"/>
        <end position="312"/>
    </location>
</feature>
<feature type="coiled-coil region" evidence="2">
    <location>
        <begin position="184"/>
        <end position="216"/>
    </location>
</feature>
<feature type="compositionally biased region" description="Basic and acidic residues" evidence="4">
    <location>
        <begin position="214"/>
        <end position="226"/>
    </location>
</feature>
<feature type="compositionally biased region" description="Gly residues" evidence="4">
    <location>
        <begin position="228"/>
        <end position="253"/>
    </location>
</feature>
<feature type="compositionally biased region" description="Basic and acidic residues" evidence="4">
    <location>
        <begin position="293"/>
        <end position="303"/>
    </location>
</feature>
<feature type="modified residue" description="N-acetylserine" evidence="1">
    <location>
        <position position="2"/>
    </location>
</feature>
<feature type="modified residue" description="N6-acetyllysine" evidence="17">
    <location>
        <position position="44"/>
    </location>
</feature>
<feature type="modified residue" description="Phosphoserine" evidence="15">
    <location>
        <position position="135"/>
    </location>
</feature>
<feature type="modified residue" description="N6-acetyllysine; alternate" evidence="17">
    <location>
        <position position="165"/>
    </location>
</feature>
<feature type="modified residue" description="Phosphothreonine" evidence="13 15 16">
    <location>
        <position position="268"/>
    </location>
</feature>
<feature type="modified residue" description="Phosphoserine" evidence="13 15 16">
    <location>
        <position position="270"/>
    </location>
</feature>
<feature type="modified residue" description="Phosphothreonine" evidence="13 14 15 16">
    <location>
        <position position="274"/>
    </location>
</feature>
<feature type="modified residue" description="Phosphothreonine" evidence="13 16">
    <location>
        <position position="292"/>
    </location>
</feature>
<feature type="modified residue" description="Phosphoserine" evidence="16">
    <location>
        <position position="294"/>
    </location>
</feature>
<feature type="modified residue" description="Phosphoserine" evidence="16">
    <location>
        <position position="301"/>
    </location>
</feature>
<feature type="modified residue" description="Phosphothreonine" evidence="13 16">
    <location>
        <position position="304"/>
    </location>
</feature>
<feature type="cross-link" description="Glycyl lysine isopeptide (Lys-Gly) (interchain with G-Cter in SUMO2)" evidence="1">
    <location>
        <position position="4"/>
    </location>
</feature>
<feature type="cross-link" description="Glycyl lysine isopeptide (Lys-Gly) (interchain with G-Cter in SUMO2)" evidence="1">
    <location>
        <position position="94"/>
    </location>
</feature>
<feature type="cross-link" description="Glycyl lysine isopeptide (Lys-Gly) (interchain with G-Cter in SUMO2)" evidence="1">
    <location>
        <position position="99"/>
    </location>
</feature>
<feature type="cross-link" description="Glycyl lysine isopeptide (Lys-Gly) (interchain with G-Cter in SUMO2)" evidence="1">
    <location>
        <position position="159"/>
    </location>
</feature>
<feature type="cross-link" description="Glycyl lysine isopeptide (Lys-Gly) (interchain with G-Cter in SUMO2); alternate" evidence="1">
    <location>
        <position position="165"/>
    </location>
</feature>
<feature type="cross-link" description="Glycyl lysine isopeptide (Lys-Gly) (interchain with G-Cter in SUMO2)" evidence="1">
    <location>
        <position position="179"/>
    </location>
</feature>
<feature type="cross-link" description="Glycyl lysine isopeptide (Lys-Gly) (interchain with G-Cter in SUMO2)" evidence="1">
    <location>
        <position position="191"/>
    </location>
</feature>
<feature type="splice variant" id="VSP_005805" description="In isoform 1." evidence="8 9 10 11">
    <location>
        <begin position="110"/>
        <end position="125"/>
    </location>
</feature>
<feature type="sequence conflict" description="In Ref. 1; AAC60688 and 5; AAH04851/AAH16587." evidence="12" ref="1 5">
    <original>S</original>
    <variation>G</variation>
    <location>
        <position position="249"/>
    </location>
</feature>
<feature type="sequence conflict" description="In Ref. 1; AAC60688." evidence="12" ref="1">
    <original>T</original>
    <variation>I</variation>
    <location>
        <position position="281"/>
    </location>
</feature>
<comment type="function">
    <text evidence="1 5">RNA-binding protein that acts as a transcriptional cofactor for cholesterol biosynthetic genes in the liver (PubMed:27251289). Binds the lipid-responsive non-coding RNA LeXis and is required for LeXis-mediated effect on cholesterogenesis (PubMed:27251289). May be a heterogeneous nuclear ribonucleoprotein (hnRNP) (By similarity).</text>
</comment>
<comment type="subunit">
    <text evidence="1">Identified in the spliceosome C complex. Interacts (through its RNA-binding domain) with FUS (through its RNA-binding domain); both are components of the same RNPs.</text>
</comment>
<comment type="interaction">
    <interactant intactId="EBI-6878379">
        <id>Q64012</id>
    </interactant>
    <interactant intactId="EBI-1606991">
        <id>Q61545</id>
        <label>Ewsr1</label>
    </interactant>
    <organismsDiffer>false</organismsDiffer>
    <experiments>2</experiments>
</comment>
<comment type="subcellular location">
    <subcellularLocation>
        <location evidence="5">Nucleus</location>
    </subcellularLocation>
</comment>
<comment type="alternative products">
    <event type="alternative splicing"/>
    <isoform>
        <id>Q64012-1</id>
        <name>2</name>
        <sequence type="displayed"/>
    </isoform>
    <isoform>
        <id>Q64012-2</id>
        <name>1</name>
        <sequence type="described" ref="VSP_005805"/>
    </isoform>
</comment>
<comment type="tissue specificity">
    <text evidence="7">Widely expressed. Expressed in brain, testis, lung, spleen and kidney. Weakly expressed in liver.</text>
</comment>
<comment type="developmental stage">
    <text evidence="7">Expressed in the unfertilized egg, in the blastocyst, as well as in the developing embryo and fetus. Expressed in developing skin.</text>
</comment>
<comment type="disease">
    <text evidence="6 7">Defects in Raly are the cause of lethal yellow mutation (A(y)), a dominant allele that cause embryonic lethality when homozygous, and pleiotropic effects when heterozygous, including yellow pelage, obesity, non-insulin dependent diabetes and increased tumor susceptibility. A(y) is due to a 170 kb deletion that removes all but the promoter and non-coding first exon of Raly and links them to the ASIP/Agouti gene.</text>
</comment>
<comment type="similarity">
    <text evidence="12">Belongs to the RRM HNRPC family. RALY subfamily.</text>
</comment>
<gene>
    <name type="primary">Raly</name>
    <name type="synonym">Merc</name>
</gene>